<evidence type="ECO:0000250" key="1">
    <source>
        <dbReference type="UniProtKB" id="Q96EC8"/>
    </source>
</evidence>
<evidence type="ECO:0000255" key="2"/>
<evidence type="ECO:0000305" key="3"/>
<gene>
    <name type="primary">yipf6</name>
    <name type="ORF">TGas105o14.1</name>
</gene>
<dbReference type="EMBL" id="CR926375">
    <property type="protein sequence ID" value="CAJ83903.1"/>
    <property type="molecule type" value="mRNA"/>
</dbReference>
<dbReference type="EMBL" id="BC122940">
    <property type="protein sequence ID" value="AAI22941.1"/>
    <property type="molecule type" value="mRNA"/>
</dbReference>
<dbReference type="RefSeq" id="NP_001015932.1">
    <property type="nucleotide sequence ID" value="NM_001015932.3"/>
</dbReference>
<dbReference type="FunCoup" id="Q28CH8">
    <property type="interactions" value="1915"/>
</dbReference>
<dbReference type="STRING" id="8364.ENSXETP00000004624"/>
<dbReference type="PaxDb" id="8364-ENSXETP00000011096"/>
<dbReference type="DNASU" id="548686"/>
<dbReference type="GeneID" id="548686"/>
<dbReference type="KEGG" id="xtr:548686"/>
<dbReference type="AGR" id="Xenbase:XB-GENE-1009736"/>
<dbReference type="CTD" id="286451"/>
<dbReference type="Xenbase" id="XB-GENE-1009736">
    <property type="gene designation" value="yipf6"/>
</dbReference>
<dbReference type="eggNOG" id="KOG2946">
    <property type="taxonomic scope" value="Eukaryota"/>
</dbReference>
<dbReference type="HOGENOM" id="CLU_059592_3_0_1"/>
<dbReference type="InParanoid" id="Q28CH8"/>
<dbReference type="OMA" id="VMAMFGW"/>
<dbReference type="OrthoDB" id="411251at2759"/>
<dbReference type="PhylomeDB" id="Q28CH8"/>
<dbReference type="Reactome" id="R-XTR-432722">
    <property type="pathway name" value="Golgi Associated Vesicle Biogenesis"/>
</dbReference>
<dbReference type="Proteomes" id="UP000008143">
    <property type="component" value="Chromosome 8"/>
</dbReference>
<dbReference type="Bgee" id="ENSXETG00000005093">
    <property type="expression patterns" value="Expressed in liver and 14 other cell types or tissues"/>
</dbReference>
<dbReference type="ExpressionAtlas" id="Q28CH8">
    <property type="expression patterns" value="baseline"/>
</dbReference>
<dbReference type="GO" id="GO:0005797">
    <property type="term" value="C:Golgi medial cisterna"/>
    <property type="evidence" value="ECO:0000250"/>
    <property type="project" value="UniProtKB"/>
</dbReference>
<dbReference type="GO" id="GO:0000139">
    <property type="term" value="C:Golgi membrane"/>
    <property type="evidence" value="ECO:0007669"/>
    <property type="project" value="UniProtKB-SubCell"/>
</dbReference>
<dbReference type="GO" id="GO:0000138">
    <property type="term" value="C:Golgi trans cisterna"/>
    <property type="evidence" value="ECO:0000250"/>
    <property type="project" value="UniProtKB"/>
</dbReference>
<dbReference type="GO" id="GO:0005802">
    <property type="term" value="C:trans-Golgi network"/>
    <property type="evidence" value="ECO:0000250"/>
    <property type="project" value="UniProtKB"/>
</dbReference>
<dbReference type="GO" id="GO:0006888">
    <property type="term" value="P:endoplasmic reticulum to Golgi vesicle-mediated transport"/>
    <property type="evidence" value="ECO:0007669"/>
    <property type="project" value="InterPro"/>
</dbReference>
<dbReference type="InterPro" id="IPR045231">
    <property type="entry name" value="Yip1/4-like"/>
</dbReference>
<dbReference type="InterPro" id="IPR006977">
    <property type="entry name" value="Yip1_dom"/>
</dbReference>
<dbReference type="PANTHER" id="PTHR21236">
    <property type="entry name" value="GOLGI MEMBRANE PROTEIN YIP1"/>
    <property type="match status" value="1"/>
</dbReference>
<dbReference type="PANTHER" id="PTHR21236:SF1">
    <property type="entry name" value="PROTEIN YIPF6"/>
    <property type="match status" value="1"/>
</dbReference>
<dbReference type="Pfam" id="PF04893">
    <property type="entry name" value="Yip1"/>
    <property type="match status" value="1"/>
</dbReference>
<organism>
    <name type="scientific">Xenopus tropicalis</name>
    <name type="common">Western clawed frog</name>
    <name type="synonym">Silurana tropicalis</name>
    <dbReference type="NCBI Taxonomy" id="8364"/>
    <lineage>
        <taxon>Eukaryota</taxon>
        <taxon>Metazoa</taxon>
        <taxon>Chordata</taxon>
        <taxon>Craniata</taxon>
        <taxon>Vertebrata</taxon>
        <taxon>Euteleostomi</taxon>
        <taxon>Amphibia</taxon>
        <taxon>Batrachia</taxon>
        <taxon>Anura</taxon>
        <taxon>Pipoidea</taxon>
        <taxon>Pipidae</taxon>
        <taxon>Xenopodinae</taxon>
        <taxon>Xenopus</taxon>
        <taxon>Silurana</taxon>
    </lineage>
</organism>
<feature type="chain" id="PRO_0000242672" description="Protein YIPF6">
    <location>
        <begin position="1"/>
        <end position="233"/>
    </location>
</feature>
<feature type="topological domain" description="Cytoplasmic" evidence="1">
    <location>
        <begin position="1"/>
        <end position="84"/>
    </location>
</feature>
<feature type="transmembrane region" description="Helical" evidence="2">
    <location>
        <begin position="85"/>
        <end position="105"/>
    </location>
</feature>
<feature type="topological domain" description="Lumenal" evidence="3">
    <location>
        <begin position="106"/>
        <end position="111"/>
    </location>
</feature>
<feature type="transmembrane region" description="Helical" evidence="2">
    <location>
        <begin position="112"/>
        <end position="132"/>
    </location>
</feature>
<feature type="topological domain" description="Cytoplasmic" evidence="3">
    <location>
        <begin position="133"/>
        <end position="142"/>
    </location>
</feature>
<feature type="transmembrane region" description="Helical" evidence="2">
    <location>
        <begin position="143"/>
        <end position="163"/>
    </location>
</feature>
<feature type="topological domain" description="Lumenal" evidence="3">
    <location>
        <begin position="164"/>
        <end position="180"/>
    </location>
</feature>
<feature type="transmembrane region" description="Helical" evidence="2">
    <location>
        <begin position="181"/>
        <end position="201"/>
    </location>
</feature>
<feature type="topological domain" description="Cytoplasmic" evidence="3">
    <location>
        <begin position="202"/>
        <end position="208"/>
    </location>
</feature>
<feature type="transmembrane region" description="Helical" evidence="2">
    <location>
        <begin position="209"/>
        <end position="229"/>
    </location>
</feature>
<feature type="topological domain" description="Lumenal" evidence="1">
    <location>
        <begin position="230"/>
        <end position="233"/>
    </location>
</feature>
<reference key="1">
    <citation type="submission" date="2006-03" db="EMBL/GenBank/DDBJ databases">
        <authorList>
            <consortium name="Sanger Xenopus tropicalis EST/cDNA project"/>
        </authorList>
    </citation>
    <scope>NUCLEOTIDE SEQUENCE [LARGE SCALE MRNA]</scope>
    <source>
        <tissue>Gastrula</tissue>
    </source>
</reference>
<reference key="2">
    <citation type="submission" date="2006-09" db="EMBL/GenBank/DDBJ databases">
        <authorList>
            <consortium name="NIH - Xenopus Gene Collection (XGC) project"/>
        </authorList>
    </citation>
    <scope>NUCLEOTIDE SEQUENCE [LARGE SCALE MRNA]</scope>
    <source>
        <tissue>Testis</tissue>
    </source>
</reference>
<protein>
    <recommendedName>
        <fullName>Protein YIPF6</fullName>
    </recommendedName>
    <alternativeName>
        <fullName>YIP1 family member 6</fullName>
    </alternativeName>
</protein>
<sequence length="233" mass="25422">MAETEGFGDSGSKQLFAGLSNVSISGDIPVEGEITVPMASTSQEDDLSTLDEPVKDTIMRDLKAVGNKFLHVMYPKKSTTLLRDWDLWGPLVLCVSLALMLQGGNADSKDDGGPQFAEVFVIIWFGAVVITLNSKLLGGTISFFQSLCVLGYCILPLTVAMLVCRLVLLLSHTTASFIVRLVVVTVMFAWSTFASTAFLADSQPPNRRALAVYPIFLFYFVISWMVLTFNTVS</sequence>
<comment type="subcellular location">
    <subcellularLocation>
        <location evidence="1">Golgi apparatus membrane</location>
        <topology evidence="1">Multi-pass membrane protein</topology>
    </subcellularLocation>
    <text evidence="1">Evenly distributed between cis- and trans-Golgi apparatus. Mainly localizes within medial-/trans-Golgi and trans-Golgi network (TGN), while less so within cis-Golgi.</text>
</comment>
<comment type="similarity">
    <text evidence="3">Belongs to the YIP1 family.</text>
</comment>
<accession>Q28CH8</accession>
<accession>Q05B29</accession>
<keyword id="KW-0333">Golgi apparatus</keyword>
<keyword id="KW-0472">Membrane</keyword>
<keyword id="KW-1185">Reference proteome</keyword>
<keyword id="KW-0812">Transmembrane</keyword>
<keyword id="KW-1133">Transmembrane helix</keyword>
<proteinExistence type="evidence at transcript level"/>
<name>YIPF6_XENTR</name>